<sequence length="207" mass="23276">MLSVILKESVRNLGKAGVVTKVKPGYARYLLAQKKAVRATKENLKILEEQHISIQQENLEKLEAAKALQVSLKDEFLIIIRQAADDGKLFGSVTPKCISKLLSDKGYNIHYHNIFFHSVIKYIGEYVVNLELHHDLVVPMMLYVVKNDLGAMQAQKLHLDKQKKEEKAKDEVSATEKDEELMLSSVTNDNDGDGAKEIVVEGTEESQ</sequence>
<dbReference type="EMBL" id="CR767821">
    <property type="protein sequence ID" value="CAH58417.1"/>
    <property type="molecule type" value="Genomic_DNA"/>
</dbReference>
<dbReference type="EMBL" id="CR925678">
    <property type="protein sequence ID" value="CAI27214.1"/>
    <property type="molecule type" value="Genomic_DNA"/>
</dbReference>
<dbReference type="RefSeq" id="WP_011155364.1">
    <property type="nucleotide sequence ID" value="NC_005295.2"/>
</dbReference>
<dbReference type="SMR" id="Q5HAJ6"/>
<dbReference type="GeneID" id="33057730"/>
<dbReference type="KEGG" id="eru:Erum6850"/>
<dbReference type="KEGG" id="erw:ERWE_CDS_07200"/>
<dbReference type="eggNOG" id="COG0359">
    <property type="taxonomic scope" value="Bacteria"/>
</dbReference>
<dbReference type="HOGENOM" id="CLU_078938_1_1_5"/>
<dbReference type="Proteomes" id="UP000001021">
    <property type="component" value="Chromosome"/>
</dbReference>
<dbReference type="GO" id="GO:1990904">
    <property type="term" value="C:ribonucleoprotein complex"/>
    <property type="evidence" value="ECO:0007669"/>
    <property type="project" value="UniProtKB-KW"/>
</dbReference>
<dbReference type="GO" id="GO:0005840">
    <property type="term" value="C:ribosome"/>
    <property type="evidence" value="ECO:0007669"/>
    <property type="project" value="UniProtKB-KW"/>
</dbReference>
<dbReference type="GO" id="GO:0019843">
    <property type="term" value="F:rRNA binding"/>
    <property type="evidence" value="ECO:0007669"/>
    <property type="project" value="UniProtKB-UniRule"/>
</dbReference>
<dbReference type="GO" id="GO:0003735">
    <property type="term" value="F:structural constituent of ribosome"/>
    <property type="evidence" value="ECO:0007669"/>
    <property type="project" value="InterPro"/>
</dbReference>
<dbReference type="GO" id="GO:0006412">
    <property type="term" value="P:translation"/>
    <property type="evidence" value="ECO:0007669"/>
    <property type="project" value="UniProtKB-UniRule"/>
</dbReference>
<dbReference type="Gene3D" id="3.10.430.100">
    <property type="entry name" value="Ribosomal protein L9, C-terminal domain"/>
    <property type="match status" value="1"/>
</dbReference>
<dbReference type="Gene3D" id="3.40.5.10">
    <property type="entry name" value="Ribosomal protein L9, N-terminal domain"/>
    <property type="match status" value="1"/>
</dbReference>
<dbReference type="HAMAP" id="MF_00503">
    <property type="entry name" value="Ribosomal_bL9"/>
    <property type="match status" value="1"/>
</dbReference>
<dbReference type="InterPro" id="IPR000244">
    <property type="entry name" value="Ribosomal_bL9"/>
</dbReference>
<dbReference type="InterPro" id="IPR009027">
    <property type="entry name" value="Ribosomal_bL9/RNase_H1_N"/>
</dbReference>
<dbReference type="InterPro" id="IPR020594">
    <property type="entry name" value="Ribosomal_bL9_bac/chp"/>
</dbReference>
<dbReference type="InterPro" id="IPR020069">
    <property type="entry name" value="Ribosomal_bL9_C"/>
</dbReference>
<dbReference type="InterPro" id="IPR036791">
    <property type="entry name" value="Ribosomal_bL9_C_sf"/>
</dbReference>
<dbReference type="InterPro" id="IPR020070">
    <property type="entry name" value="Ribosomal_bL9_N"/>
</dbReference>
<dbReference type="InterPro" id="IPR036935">
    <property type="entry name" value="Ribosomal_bL9_N_sf"/>
</dbReference>
<dbReference type="NCBIfam" id="TIGR00158">
    <property type="entry name" value="L9"/>
    <property type="match status" value="1"/>
</dbReference>
<dbReference type="PANTHER" id="PTHR21368">
    <property type="entry name" value="50S RIBOSOMAL PROTEIN L9"/>
    <property type="match status" value="1"/>
</dbReference>
<dbReference type="Pfam" id="PF03948">
    <property type="entry name" value="Ribosomal_L9_C"/>
    <property type="match status" value="1"/>
</dbReference>
<dbReference type="Pfam" id="PF01281">
    <property type="entry name" value="Ribosomal_L9_N"/>
    <property type="match status" value="1"/>
</dbReference>
<dbReference type="SUPFAM" id="SSF55658">
    <property type="entry name" value="L9 N-domain-like"/>
    <property type="match status" value="1"/>
</dbReference>
<dbReference type="SUPFAM" id="SSF55653">
    <property type="entry name" value="Ribosomal protein L9 C-domain"/>
    <property type="match status" value="1"/>
</dbReference>
<evidence type="ECO:0000255" key="1">
    <source>
        <dbReference type="HAMAP-Rule" id="MF_00503"/>
    </source>
</evidence>
<evidence type="ECO:0000256" key="2">
    <source>
        <dbReference type="SAM" id="MobiDB-lite"/>
    </source>
</evidence>
<evidence type="ECO:0000305" key="3"/>
<comment type="function">
    <text evidence="1">Binds to the 23S rRNA.</text>
</comment>
<comment type="similarity">
    <text evidence="1">Belongs to the bacterial ribosomal protein bL9 family.</text>
</comment>
<feature type="chain" id="PRO_0000258456" description="Large ribosomal subunit protein bL9">
    <location>
        <begin position="1"/>
        <end position="207"/>
    </location>
</feature>
<feature type="region of interest" description="Disordered" evidence="2">
    <location>
        <begin position="162"/>
        <end position="207"/>
    </location>
</feature>
<feature type="compositionally biased region" description="Basic and acidic residues" evidence="2">
    <location>
        <begin position="162"/>
        <end position="176"/>
    </location>
</feature>
<keyword id="KW-0687">Ribonucleoprotein</keyword>
<keyword id="KW-0689">Ribosomal protein</keyword>
<keyword id="KW-0694">RNA-binding</keyword>
<keyword id="KW-0699">rRNA-binding</keyword>
<accession>Q5HAJ6</accession>
<accession>Q5FDE8</accession>
<name>RL9_EHRRW</name>
<protein>
    <recommendedName>
        <fullName evidence="1">Large ribosomal subunit protein bL9</fullName>
    </recommendedName>
    <alternativeName>
        <fullName evidence="3">50S ribosomal protein L9</fullName>
    </alternativeName>
</protein>
<gene>
    <name evidence="1" type="primary">rplI</name>
    <name type="ordered locus">Erum6850</name>
    <name type="ordered locus">ERWE_CDS_07200</name>
</gene>
<proteinExistence type="inferred from homology"/>
<organism>
    <name type="scientific">Ehrlichia ruminantium (strain Welgevonden)</name>
    <dbReference type="NCBI Taxonomy" id="254945"/>
    <lineage>
        <taxon>Bacteria</taxon>
        <taxon>Pseudomonadati</taxon>
        <taxon>Pseudomonadota</taxon>
        <taxon>Alphaproteobacteria</taxon>
        <taxon>Rickettsiales</taxon>
        <taxon>Anaplasmataceae</taxon>
        <taxon>Ehrlichia</taxon>
    </lineage>
</organism>
<reference key="1">
    <citation type="journal article" date="2005" name="Proc. Natl. Acad. Sci. U.S.A.">
        <title>The genome of the heartwater agent Ehrlichia ruminantium contains multiple tandem repeats of actively variable copy number.</title>
        <authorList>
            <person name="Collins N.E."/>
            <person name="Liebenberg J."/>
            <person name="de Villiers E.P."/>
            <person name="Brayton K.A."/>
            <person name="Louw E."/>
            <person name="Pretorius A."/>
            <person name="Faber F.E."/>
            <person name="van Heerden H."/>
            <person name="Josemans A."/>
            <person name="van Kleef M."/>
            <person name="Steyn H.C."/>
            <person name="van Strijp M.F."/>
            <person name="Zweygarth E."/>
            <person name="Jongejan F."/>
            <person name="Maillard J.C."/>
            <person name="Berthier D."/>
            <person name="Botha M."/>
            <person name="Joubert F."/>
            <person name="Corton C.H."/>
            <person name="Thomson N.R."/>
            <person name="Allsopp M.T."/>
            <person name="Allsopp B.A."/>
        </authorList>
    </citation>
    <scope>NUCLEOTIDE SEQUENCE [LARGE SCALE GENOMIC DNA]</scope>
    <source>
        <strain>Welgevonden</strain>
    </source>
</reference>
<reference key="2">
    <citation type="journal article" date="2006" name="J. Bacteriol.">
        <title>Comparative genomic analysis of three strains of Ehrlichia ruminantium reveals an active process of genome size plasticity.</title>
        <authorList>
            <person name="Frutos R."/>
            <person name="Viari A."/>
            <person name="Ferraz C."/>
            <person name="Morgat A."/>
            <person name="Eychenie S."/>
            <person name="Kandassamy Y."/>
            <person name="Chantal I."/>
            <person name="Bensaid A."/>
            <person name="Coissac E."/>
            <person name="Vachiery N."/>
            <person name="Demaille J."/>
            <person name="Martinez D."/>
        </authorList>
    </citation>
    <scope>NUCLEOTIDE SEQUENCE [LARGE SCALE GENOMIC DNA]</scope>
    <source>
        <strain>Welgevonden</strain>
    </source>
</reference>